<sequence>MAKGARDKIKLESTAGTGHFYTTTKNKRNMPEKMEIMKFDPVARKHVAYKETKIK</sequence>
<dbReference type="EMBL" id="BX571965">
    <property type="protein sequence ID" value="CAH34909.1"/>
    <property type="molecule type" value="Genomic_DNA"/>
</dbReference>
<dbReference type="RefSeq" id="WP_004185395.1">
    <property type="nucleotide sequence ID" value="NZ_CP009538.1"/>
</dbReference>
<dbReference type="RefSeq" id="YP_107542.1">
    <property type="nucleotide sequence ID" value="NC_006350.1"/>
</dbReference>
<dbReference type="SMR" id="Q63WH4"/>
<dbReference type="STRING" id="272560.BPSL0915"/>
<dbReference type="GeneID" id="95550920"/>
<dbReference type="KEGG" id="bps:BPSL0915"/>
<dbReference type="PATRIC" id="fig|272560.51.peg.667"/>
<dbReference type="eggNOG" id="COG0267">
    <property type="taxonomic scope" value="Bacteria"/>
</dbReference>
<dbReference type="PRO" id="PR:Q63WH4"/>
<dbReference type="Proteomes" id="UP000000605">
    <property type="component" value="Chromosome 1"/>
</dbReference>
<dbReference type="GO" id="GO:0022625">
    <property type="term" value="C:cytosolic large ribosomal subunit"/>
    <property type="evidence" value="ECO:0007669"/>
    <property type="project" value="TreeGrafter"/>
</dbReference>
<dbReference type="GO" id="GO:0003735">
    <property type="term" value="F:structural constituent of ribosome"/>
    <property type="evidence" value="ECO:0007669"/>
    <property type="project" value="InterPro"/>
</dbReference>
<dbReference type="GO" id="GO:0006412">
    <property type="term" value="P:translation"/>
    <property type="evidence" value="ECO:0007669"/>
    <property type="project" value="UniProtKB-UniRule"/>
</dbReference>
<dbReference type="FunFam" id="2.20.28.120:FF:000001">
    <property type="entry name" value="50S ribosomal protein L33"/>
    <property type="match status" value="1"/>
</dbReference>
<dbReference type="Gene3D" id="2.20.28.120">
    <property type="entry name" value="Ribosomal protein L33"/>
    <property type="match status" value="1"/>
</dbReference>
<dbReference type="HAMAP" id="MF_00294">
    <property type="entry name" value="Ribosomal_bL33"/>
    <property type="match status" value="1"/>
</dbReference>
<dbReference type="InterPro" id="IPR001705">
    <property type="entry name" value="Ribosomal_bL33"/>
</dbReference>
<dbReference type="InterPro" id="IPR018264">
    <property type="entry name" value="Ribosomal_bL33_CS"/>
</dbReference>
<dbReference type="InterPro" id="IPR038584">
    <property type="entry name" value="Ribosomal_bL33_sf"/>
</dbReference>
<dbReference type="InterPro" id="IPR011332">
    <property type="entry name" value="Ribosomal_zn-bd"/>
</dbReference>
<dbReference type="NCBIfam" id="NF001860">
    <property type="entry name" value="PRK00595.1"/>
    <property type="match status" value="1"/>
</dbReference>
<dbReference type="NCBIfam" id="TIGR01023">
    <property type="entry name" value="rpmG_bact"/>
    <property type="match status" value="1"/>
</dbReference>
<dbReference type="PANTHER" id="PTHR15238">
    <property type="entry name" value="54S RIBOSOMAL PROTEIN L39, MITOCHONDRIAL"/>
    <property type="match status" value="1"/>
</dbReference>
<dbReference type="PANTHER" id="PTHR15238:SF1">
    <property type="entry name" value="LARGE RIBOSOMAL SUBUNIT PROTEIN BL33M"/>
    <property type="match status" value="1"/>
</dbReference>
<dbReference type="Pfam" id="PF00471">
    <property type="entry name" value="Ribosomal_L33"/>
    <property type="match status" value="1"/>
</dbReference>
<dbReference type="SUPFAM" id="SSF57829">
    <property type="entry name" value="Zn-binding ribosomal proteins"/>
    <property type="match status" value="1"/>
</dbReference>
<dbReference type="PROSITE" id="PS00582">
    <property type="entry name" value="RIBOSOMAL_L33"/>
    <property type="match status" value="1"/>
</dbReference>
<evidence type="ECO:0000255" key="1">
    <source>
        <dbReference type="HAMAP-Rule" id="MF_00294"/>
    </source>
</evidence>
<evidence type="ECO:0000256" key="2">
    <source>
        <dbReference type="SAM" id="MobiDB-lite"/>
    </source>
</evidence>
<evidence type="ECO:0000305" key="3"/>
<comment type="similarity">
    <text evidence="1">Belongs to the bacterial ribosomal protein bL33 family.</text>
</comment>
<protein>
    <recommendedName>
        <fullName evidence="1">Large ribosomal subunit protein bL33</fullName>
    </recommendedName>
    <alternativeName>
        <fullName evidence="3">50S ribosomal protein L33</fullName>
    </alternativeName>
</protein>
<gene>
    <name evidence="1" type="primary">rpmG</name>
    <name type="ordered locus">BPSL0915</name>
</gene>
<reference key="1">
    <citation type="journal article" date="2004" name="Proc. Natl. Acad. Sci. U.S.A.">
        <title>Genomic plasticity of the causative agent of melioidosis, Burkholderia pseudomallei.</title>
        <authorList>
            <person name="Holden M.T.G."/>
            <person name="Titball R.W."/>
            <person name="Peacock S.J."/>
            <person name="Cerdeno-Tarraga A.-M."/>
            <person name="Atkins T."/>
            <person name="Crossman L.C."/>
            <person name="Pitt T."/>
            <person name="Churcher C."/>
            <person name="Mungall K.L."/>
            <person name="Bentley S.D."/>
            <person name="Sebaihia M."/>
            <person name="Thomson N.R."/>
            <person name="Bason N."/>
            <person name="Beacham I.R."/>
            <person name="Brooks K."/>
            <person name="Brown K.A."/>
            <person name="Brown N.F."/>
            <person name="Challis G.L."/>
            <person name="Cherevach I."/>
            <person name="Chillingworth T."/>
            <person name="Cronin A."/>
            <person name="Crossett B."/>
            <person name="Davis P."/>
            <person name="DeShazer D."/>
            <person name="Feltwell T."/>
            <person name="Fraser A."/>
            <person name="Hance Z."/>
            <person name="Hauser H."/>
            <person name="Holroyd S."/>
            <person name="Jagels K."/>
            <person name="Keith K.E."/>
            <person name="Maddison M."/>
            <person name="Moule S."/>
            <person name="Price C."/>
            <person name="Quail M.A."/>
            <person name="Rabbinowitsch E."/>
            <person name="Rutherford K."/>
            <person name="Sanders M."/>
            <person name="Simmonds M."/>
            <person name="Songsivilai S."/>
            <person name="Stevens K."/>
            <person name="Tumapa S."/>
            <person name="Vesaratchavest M."/>
            <person name="Whitehead S."/>
            <person name="Yeats C."/>
            <person name="Barrell B.G."/>
            <person name="Oyston P.C.F."/>
            <person name="Parkhill J."/>
        </authorList>
    </citation>
    <scope>NUCLEOTIDE SEQUENCE [LARGE SCALE GENOMIC DNA]</scope>
    <source>
        <strain>K96243</strain>
    </source>
</reference>
<feature type="chain" id="PRO_1000115117" description="Large ribosomal subunit protein bL33">
    <location>
        <begin position="1"/>
        <end position="55"/>
    </location>
</feature>
<feature type="region of interest" description="Disordered" evidence="2">
    <location>
        <begin position="1"/>
        <end position="24"/>
    </location>
</feature>
<feature type="compositionally biased region" description="Basic and acidic residues" evidence="2">
    <location>
        <begin position="1"/>
        <end position="11"/>
    </location>
</feature>
<feature type="compositionally biased region" description="Polar residues" evidence="2">
    <location>
        <begin position="14"/>
        <end position="24"/>
    </location>
</feature>
<keyword id="KW-1185">Reference proteome</keyword>
<keyword id="KW-0687">Ribonucleoprotein</keyword>
<keyword id="KW-0689">Ribosomal protein</keyword>
<name>RL33_BURPS</name>
<accession>Q63WH4</accession>
<proteinExistence type="inferred from homology"/>
<organism>
    <name type="scientific">Burkholderia pseudomallei (strain K96243)</name>
    <dbReference type="NCBI Taxonomy" id="272560"/>
    <lineage>
        <taxon>Bacteria</taxon>
        <taxon>Pseudomonadati</taxon>
        <taxon>Pseudomonadota</taxon>
        <taxon>Betaproteobacteria</taxon>
        <taxon>Burkholderiales</taxon>
        <taxon>Burkholderiaceae</taxon>
        <taxon>Burkholderia</taxon>
        <taxon>pseudomallei group</taxon>
    </lineage>
</organism>